<accession>O42241</accession>
<dbReference type="EMBL" id="AF023618">
    <property type="protein sequence ID" value="AAB82559.1"/>
    <property type="molecule type" value="mRNA"/>
</dbReference>
<dbReference type="RefSeq" id="NP_001117717.1">
    <property type="nucleotide sequence ID" value="NM_001124245.1"/>
</dbReference>
<dbReference type="GeneID" id="100135862"/>
<dbReference type="KEGG" id="omy:100135862"/>
<dbReference type="OrthoDB" id="8490433at2759"/>
<dbReference type="Proteomes" id="UP000694395">
    <property type="component" value="Unplaced"/>
</dbReference>
<dbReference type="GO" id="GO:0005615">
    <property type="term" value="C:extracellular space"/>
    <property type="evidence" value="ECO:0000250"/>
    <property type="project" value="UniProtKB"/>
</dbReference>
<dbReference type="GO" id="GO:0005183">
    <property type="term" value="F:gonadotropin hormone-releasing hormone activity"/>
    <property type="evidence" value="ECO:0007669"/>
    <property type="project" value="TreeGrafter"/>
</dbReference>
<dbReference type="GO" id="GO:0031530">
    <property type="term" value="F:gonadotropin-releasing hormone receptor binding"/>
    <property type="evidence" value="ECO:0007669"/>
    <property type="project" value="TreeGrafter"/>
</dbReference>
<dbReference type="InterPro" id="IPR002012">
    <property type="entry name" value="GnRH"/>
</dbReference>
<dbReference type="InterPro" id="IPR019792">
    <property type="entry name" value="Gonadoliberin"/>
</dbReference>
<dbReference type="PANTHER" id="PTHR10522">
    <property type="entry name" value="GONADOLIBERIN"/>
    <property type="match status" value="1"/>
</dbReference>
<dbReference type="PANTHER" id="PTHR10522:SF8">
    <property type="entry name" value="PROGONADOLIBERIN"/>
    <property type="match status" value="1"/>
</dbReference>
<dbReference type="Pfam" id="PF00446">
    <property type="entry name" value="GnRH"/>
    <property type="match status" value="1"/>
</dbReference>
<dbReference type="PROSITE" id="PS00473">
    <property type="entry name" value="GNRH"/>
    <property type="match status" value="1"/>
</dbReference>
<gene>
    <name type="primary">gnrh2</name>
</gene>
<protein>
    <recommendedName>
        <fullName>Progonadoliberin-2</fullName>
    </recommendedName>
    <alternativeName>
        <fullName>Progonadoliberin II</fullName>
    </alternativeName>
    <component>
        <recommendedName>
            <fullName>Gonadoliberin-2</fullName>
        </recommendedName>
        <alternativeName>
            <fullName>Gonadoliberin II</fullName>
        </alternativeName>
        <alternativeName>
            <fullName>Gonadotropin-releasing hormone II</fullName>
            <shortName>GnRH-II</shortName>
        </alternativeName>
        <alternativeName>
            <fullName>Luliberin II</fullName>
        </alternativeName>
        <alternativeName>
            <fullName>Luteinizing hormone-releasing hormone II</fullName>
            <shortName>LH-RH II</shortName>
        </alternativeName>
    </component>
    <component>
        <recommendedName>
            <fullName>GnRH-associated peptide 2</fullName>
        </recommendedName>
        <alternativeName>
            <fullName>GnRH-associated peptide II</fullName>
        </alternativeName>
    </component>
</protein>
<reference key="1">
    <citation type="submission" date="1997-09" db="EMBL/GenBank/DDBJ databases">
        <authorList>
            <person name="Penlington M.C."/>
        </authorList>
    </citation>
    <scope>NUCLEOTIDE SEQUENCE [MRNA]</scope>
</reference>
<comment type="function">
    <text>Stimulates the secretion of gonadotropins.</text>
</comment>
<comment type="subcellular location">
    <subcellularLocation>
        <location>Secreted</location>
    </subcellularLocation>
</comment>
<comment type="similarity">
    <text evidence="3">Belongs to the GnRH family.</text>
</comment>
<evidence type="ECO:0000250" key="1"/>
<evidence type="ECO:0000250" key="2">
    <source>
        <dbReference type="UniProtKB" id="P69105"/>
    </source>
</evidence>
<evidence type="ECO:0000305" key="3"/>
<keyword id="KW-0027">Amidation</keyword>
<keyword id="KW-0165">Cleavage on pair of basic residues</keyword>
<keyword id="KW-0372">Hormone</keyword>
<keyword id="KW-0873">Pyrrolidone carboxylic acid</keyword>
<keyword id="KW-0964">Secreted</keyword>
<keyword id="KW-0732">Signal</keyword>
<sequence>MVSVARLVFMLGPLLCLGAQLSSSQHWSHGWYPGGKRELDSFTTSEISEGIKLCEAEGCSYLRPQRRNILKNVILDALAREFQKRK</sequence>
<feature type="signal peptide" evidence="1">
    <location>
        <begin position="1"/>
        <end position="24"/>
    </location>
</feature>
<feature type="chain" id="PRO_0000012487" description="Progonadoliberin-2">
    <location>
        <begin position="25"/>
        <end position="86"/>
    </location>
</feature>
<feature type="peptide" id="PRO_0000012488" description="Gonadoliberin-2">
    <location>
        <begin position="25"/>
        <end position="34"/>
    </location>
</feature>
<feature type="peptide" id="PRO_0000012489" description="GnRH-associated peptide 2">
    <location>
        <begin position="38"/>
        <end position="86"/>
    </location>
</feature>
<feature type="modified residue" description="Pyrrolidone carboxylic acid" evidence="2">
    <location>
        <position position="25"/>
    </location>
</feature>
<feature type="modified residue" description="Glycine amide" evidence="2">
    <location>
        <position position="34"/>
    </location>
</feature>
<proteinExistence type="inferred from homology"/>
<name>GON2_ONCMY</name>
<organism>
    <name type="scientific">Oncorhynchus mykiss</name>
    <name type="common">Rainbow trout</name>
    <name type="synonym">Salmo gairdneri</name>
    <dbReference type="NCBI Taxonomy" id="8022"/>
    <lineage>
        <taxon>Eukaryota</taxon>
        <taxon>Metazoa</taxon>
        <taxon>Chordata</taxon>
        <taxon>Craniata</taxon>
        <taxon>Vertebrata</taxon>
        <taxon>Euteleostomi</taxon>
        <taxon>Actinopterygii</taxon>
        <taxon>Neopterygii</taxon>
        <taxon>Teleostei</taxon>
        <taxon>Protacanthopterygii</taxon>
        <taxon>Salmoniformes</taxon>
        <taxon>Salmonidae</taxon>
        <taxon>Salmoninae</taxon>
        <taxon>Oncorhynchus</taxon>
    </lineage>
</organism>